<organism>
    <name type="scientific">Drosophila melanogaster</name>
    <name type="common">Fruit fly</name>
    <dbReference type="NCBI Taxonomy" id="7227"/>
    <lineage>
        <taxon>Eukaryota</taxon>
        <taxon>Metazoa</taxon>
        <taxon>Ecdysozoa</taxon>
        <taxon>Arthropoda</taxon>
        <taxon>Hexapoda</taxon>
        <taxon>Insecta</taxon>
        <taxon>Pterygota</taxon>
        <taxon>Neoptera</taxon>
        <taxon>Endopterygota</taxon>
        <taxon>Diptera</taxon>
        <taxon>Brachycera</taxon>
        <taxon>Muscomorpha</taxon>
        <taxon>Ephydroidea</taxon>
        <taxon>Drosophilidae</taxon>
        <taxon>Drosophila</taxon>
        <taxon>Sophophora</taxon>
    </lineage>
</organism>
<keyword id="KW-0158">Chromosome</keyword>
<keyword id="KW-0175">Coiled coil</keyword>
<keyword id="KW-0539">Nucleus</keyword>
<keyword id="KW-1185">Reference proteome</keyword>
<keyword id="KW-0804">Transcription</keyword>
<keyword id="KW-0805">Transcription regulation</keyword>
<comment type="function">
    <text evidence="4 5 6">Elongation factor component of the super elongation complex (SEC), a complex required to increase the catalytic rate of RNA polymerase II transcription by suppressing transient pausing by the polymerase at multiple sites along the DNA (PubMed:11689450). Elongation factor component of the little elongation complex (LEC), a complex required to regulate small nuclear RNA (snRNA) gene transcription by RNA polymerase II and III (PubMed:22195968, PubMed:23932780).</text>
</comment>
<comment type="subunit">
    <text evidence="5">Component of the super elongation complex (SEC), at least composed of Ell, Cdk9, cyclin-T (CycT), lilli and ear. Component of the little elongation complex, at least composed of Ell, Eaf, Ice1 and Ice2. Associates with RNA polymerase II.</text>
</comment>
<comment type="subcellular location">
    <subcellularLocation>
        <location evidence="4 5">Nucleus</location>
    </subcellularLocation>
    <subcellularLocation>
        <location evidence="4">Nucleus</location>
        <location evidence="4">Nucleolus</location>
    </subcellularLocation>
    <subcellularLocation>
        <location evidence="4 6">Chromosome</location>
    </subcellularLocation>
    <text evidence="4 5">Localizes with RNA polymerase II at many transcriptionally active sites along polytene euchromatic chromosome arms and at developmental puff sites. Upon heat shock, relocalizes together with RNA polymerase II to selected heat shock puffs (PubMed:11689450). Associates to transcriptionally active chromatin at snRNA genes (PubMed:22195968).</text>
</comment>
<comment type="developmental stage">
    <text evidence="4">Expressed in salivary glands (at protein level).</text>
</comment>
<comment type="similarity">
    <text evidence="7">Belongs to the ELL/occludin family.</text>
</comment>
<protein>
    <recommendedName>
        <fullName>RNA polymerase II elongation factor Ell</fullName>
        <shortName>dELL</shortName>
    </recommendedName>
</protein>
<sequence length="1059" mass="114915">MTNSIASTKCLPNALSTGNYGMSQSHRYTDDSKEYIIVKLTDSAFRAIEEYQRDDNAKRLQPGQRAKIQFVGNTGVIQFPRPATDANGIPNANGNGSDATGAGGGGGRKFGFTINNMEGTLECVQQQQRSLGVLGAVTLRMRIHANEDVYDSTRTKMAIAEETEKSKCIREIKPNQSDIGRKVKKPPSAIQSSASTASAFSSNSSNSGLTTTAFHHHSNSNNSGNNNNRSSSSSNSFNSNNHSRKLGSSPFNGLGVGSSSSSSAFASRSPNPSTLGAIGTVNGSGVVGGRYGGGAASSLASTFANGISQGYHNLSGSSPRDSMTAGTSSATASSVISSRNKMPSGGLTSSNSNSSSSSRSANSKSSGGNKMSDVSRRNIRERLIHLLALKAFKKPELFARLKNEGIRDRERNQITNILMDISTMSHNTYNLRRQMWNDVDENWPFFSEQEVQQLKRRKPQNLTPPMSSDAGSSTSGQSPTSTHTGSPPPPSSNGGPGGVGSGAGGTSMKRTSLEYDETMFSTVQPKKQRISHYKKDTPPSGTSYSSAGVSMSLGSSGSSSRSRYTPPQRQPGPLDDHSTTDLSYNVLDNIVEFMSSTAAATQQSMEQQQHPRSNSSNNRRGSSSLAGTSNGGNNKDKRNSTGSNSSSSSGYETQQDRQRSTTPMSSNRSSASSSTTPPKLAASFVPAATSGSASGTSKQRMPPQQSDYNSYNSNNAQHVASNSKKRMGSVGPSGGSNGQRQRSASGSNSGYQQVPPPSSNSRSSIQQQNQHQKQQVQQKQAPSQQQQQQQQQYHQQAKHPSPSQQLAAAAHAYAHATADTDSSATPRYDFSQYVPIQTLEVRRRYKTEFESDYDEYRKLLTRVEDVRNRFQDLSERLESARRCDNGYGDYDHIKRQIVCEYERINNDRTIGEDKERFDYLHAKLAHIKQLVMDYDKTLMSATMAMAPTDVVAAQGPDPAVAKAAARLAEHHRRQHHAAETIKQQQQQKQTHQHHLQRHLQHHLQQQQNLLQQQQNLLQQQSVSNSDDSSDSSDSNDDDDDDDEDCDDSNSNTDDDEARY</sequence>
<evidence type="ECO:0000255" key="1"/>
<evidence type="ECO:0000255" key="2">
    <source>
        <dbReference type="PROSITE-ProRule" id="PRU01324"/>
    </source>
</evidence>
<evidence type="ECO:0000256" key="3">
    <source>
        <dbReference type="SAM" id="MobiDB-lite"/>
    </source>
</evidence>
<evidence type="ECO:0000269" key="4">
    <source>
    </source>
</evidence>
<evidence type="ECO:0000269" key="5">
    <source>
    </source>
</evidence>
<evidence type="ECO:0000269" key="6">
    <source>
    </source>
</evidence>
<evidence type="ECO:0000305" key="7"/>
<proteinExistence type="evidence at protein level"/>
<dbReference type="EMBL" id="AF416770">
    <property type="protein sequence ID" value="AAL13036.1"/>
    <property type="molecule type" value="mRNA"/>
</dbReference>
<dbReference type="EMBL" id="AE014296">
    <property type="protein sequence ID" value="AAF49098.3"/>
    <property type="molecule type" value="Genomic_DNA"/>
</dbReference>
<dbReference type="EMBL" id="AE014296">
    <property type="protein sequence ID" value="ACZ94748.1"/>
    <property type="molecule type" value="Genomic_DNA"/>
</dbReference>
<dbReference type="EMBL" id="AE014296">
    <property type="protein sequence ID" value="AHN58147.1"/>
    <property type="molecule type" value="Genomic_DNA"/>
</dbReference>
<dbReference type="EMBL" id="BT050407">
    <property type="protein sequence ID" value="ACI88733.1"/>
    <property type="molecule type" value="mRNA"/>
</dbReference>
<dbReference type="EMBL" id="BT058015">
    <property type="protein sequence ID" value="ACM16731.1"/>
    <property type="molecule type" value="mRNA"/>
</dbReference>
<dbReference type="RefSeq" id="NP_001163477.1">
    <property type="nucleotide sequence ID" value="NM_001170006.2"/>
</dbReference>
<dbReference type="RefSeq" id="NP_001287122.1">
    <property type="nucleotide sequence ID" value="NM_001300193.1"/>
</dbReference>
<dbReference type="RefSeq" id="NP_649155.3">
    <property type="nucleotide sequence ID" value="NM_140898.5"/>
</dbReference>
<dbReference type="SMR" id="Q9VW51"/>
<dbReference type="BioGRID" id="65439">
    <property type="interactions" value="18"/>
</dbReference>
<dbReference type="ComplexPortal" id="CPX-2710">
    <property type="entry name" value="Little elongation complex"/>
</dbReference>
<dbReference type="ComplexPortal" id="CPX-2711">
    <property type="entry name" value="Super elongation complex"/>
</dbReference>
<dbReference type="FunCoup" id="Q9VW51">
    <property type="interactions" value="1364"/>
</dbReference>
<dbReference type="IntAct" id="Q9VW51">
    <property type="interactions" value="10"/>
</dbReference>
<dbReference type="STRING" id="7227.FBpp0310656"/>
<dbReference type="PaxDb" id="7227-FBpp0291257"/>
<dbReference type="DNASU" id="40171"/>
<dbReference type="EnsemblMetazoa" id="FBtr0074920">
    <property type="protein sequence ID" value="FBpp0074689"/>
    <property type="gene ID" value="FBgn0014037"/>
</dbReference>
<dbReference type="EnsemblMetazoa" id="FBtr0302047">
    <property type="protein sequence ID" value="FBpp0291257"/>
    <property type="gene ID" value="FBgn0014037"/>
</dbReference>
<dbReference type="EnsemblMetazoa" id="FBtr0344257">
    <property type="protein sequence ID" value="FBpp0310656"/>
    <property type="gene ID" value="FBgn0014037"/>
</dbReference>
<dbReference type="GeneID" id="40171"/>
<dbReference type="KEGG" id="dme:Dmel_CG32217"/>
<dbReference type="UCSC" id="CG32217-RA">
    <property type="organism name" value="d. melanogaster"/>
</dbReference>
<dbReference type="AGR" id="FB:FBgn0014037"/>
<dbReference type="CTD" id="40171"/>
<dbReference type="FlyBase" id="FBgn0014037">
    <property type="gene designation" value="Su(Tpl)"/>
</dbReference>
<dbReference type="VEuPathDB" id="VectorBase:FBgn0014037"/>
<dbReference type="eggNOG" id="KOG4796">
    <property type="taxonomic scope" value="Eukaryota"/>
</dbReference>
<dbReference type="GeneTree" id="ENSGT00940000170989"/>
<dbReference type="HOGENOM" id="CLU_009447_0_0_1"/>
<dbReference type="InParanoid" id="Q9VW51"/>
<dbReference type="OMA" id="PNYYEEK"/>
<dbReference type="OrthoDB" id="6284217at2759"/>
<dbReference type="PhylomeDB" id="Q9VW51"/>
<dbReference type="Reactome" id="R-DME-112382">
    <property type="pathway name" value="Formation of RNA Pol II elongation complex"/>
</dbReference>
<dbReference type="Reactome" id="R-DME-351906">
    <property type="pathway name" value="Apoptotic cleavage of cell adhesion proteins"/>
</dbReference>
<dbReference type="Reactome" id="R-DME-674695">
    <property type="pathway name" value="RNA Polymerase II Pre-transcription Events"/>
</dbReference>
<dbReference type="Reactome" id="R-DME-6796648">
    <property type="pathway name" value="TP53 Regulates Transcription of DNA Repair Genes"/>
</dbReference>
<dbReference type="Reactome" id="R-DME-6807505">
    <property type="pathway name" value="RNA polymerase II transcribes snRNA genes"/>
</dbReference>
<dbReference type="Reactome" id="R-DME-75955">
    <property type="pathway name" value="RNA Polymerase II Transcription Elongation"/>
</dbReference>
<dbReference type="SignaLink" id="Q9VW51"/>
<dbReference type="BioGRID-ORCS" id="40171">
    <property type="hits" value="1 hit in 3 CRISPR screens"/>
</dbReference>
<dbReference type="GenomeRNAi" id="40171"/>
<dbReference type="PRO" id="PR:Q9VW51"/>
<dbReference type="Proteomes" id="UP000000803">
    <property type="component" value="Chromosome 3L"/>
</dbReference>
<dbReference type="Bgee" id="FBgn0014037">
    <property type="expression patterns" value="Expressed in dorsal appendage forming follicle cell in ovary and 279 other cell types or tissues"/>
</dbReference>
<dbReference type="ExpressionAtlas" id="Q9VW51">
    <property type="expression patterns" value="baseline and differential"/>
</dbReference>
<dbReference type="GO" id="GO:0000785">
    <property type="term" value="C:chromatin"/>
    <property type="evidence" value="ECO:0000314"/>
    <property type="project" value="FlyBase"/>
</dbReference>
<dbReference type="GO" id="GO:0000791">
    <property type="term" value="C:euchromatin"/>
    <property type="evidence" value="ECO:0000315"/>
    <property type="project" value="UniProtKB"/>
</dbReference>
<dbReference type="GO" id="GO:0005730">
    <property type="term" value="C:nucleolus"/>
    <property type="evidence" value="ECO:0000314"/>
    <property type="project" value="UniProtKB"/>
</dbReference>
<dbReference type="GO" id="GO:0005634">
    <property type="term" value="C:nucleus"/>
    <property type="evidence" value="ECO:0007005"/>
    <property type="project" value="FlyBase"/>
</dbReference>
<dbReference type="GO" id="GO:0005703">
    <property type="term" value="C:polytene chromosome puff"/>
    <property type="evidence" value="ECO:0000314"/>
    <property type="project" value="UniProtKB"/>
</dbReference>
<dbReference type="GO" id="GO:0008023">
    <property type="term" value="C:transcription elongation factor complex"/>
    <property type="evidence" value="ECO:0000314"/>
    <property type="project" value="UniProtKB"/>
</dbReference>
<dbReference type="GO" id="GO:0003682">
    <property type="term" value="F:chromatin binding"/>
    <property type="evidence" value="ECO:0000314"/>
    <property type="project" value="FlyBase"/>
</dbReference>
<dbReference type="GO" id="GO:0000987">
    <property type="term" value="F:cis-regulatory region sequence-specific DNA binding"/>
    <property type="evidence" value="ECO:0000318"/>
    <property type="project" value="GO_Central"/>
</dbReference>
<dbReference type="GO" id="GO:0070063">
    <property type="term" value="F:RNA polymerase binding"/>
    <property type="evidence" value="ECO:0000314"/>
    <property type="project" value="UniProtKB"/>
</dbReference>
<dbReference type="GO" id="GO:0034605">
    <property type="term" value="P:cellular response to heat"/>
    <property type="evidence" value="ECO:0000315"/>
    <property type="project" value="FlyBase"/>
</dbReference>
<dbReference type="GO" id="GO:0097150">
    <property type="term" value="P:neuronal stem cell population maintenance"/>
    <property type="evidence" value="ECO:0000315"/>
    <property type="project" value="FlyBase"/>
</dbReference>
<dbReference type="GO" id="GO:0045893">
    <property type="term" value="P:positive regulation of DNA-templated transcription"/>
    <property type="evidence" value="ECO:0000315"/>
    <property type="project" value="FlyBase"/>
</dbReference>
<dbReference type="GO" id="GO:0032968">
    <property type="term" value="P:positive regulation of transcription elongation by RNA polymerase II"/>
    <property type="evidence" value="ECO:0000314"/>
    <property type="project" value="UniProtKB"/>
</dbReference>
<dbReference type="GO" id="GO:0042795">
    <property type="term" value="P:snRNA transcription by RNA polymerase II"/>
    <property type="evidence" value="ECO:0000315"/>
    <property type="project" value="UniProtKB"/>
</dbReference>
<dbReference type="GO" id="GO:0006368">
    <property type="term" value="P:transcription elongation by RNA polymerase II"/>
    <property type="evidence" value="ECO:0007669"/>
    <property type="project" value="InterPro"/>
</dbReference>
<dbReference type="GO" id="GO:0048190">
    <property type="term" value="P:wing disc dorsal/ventral pattern formation"/>
    <property type="evidence" value="ECO:0000316"/>
    <property type="project" value="FlyBase"/>
</dbReference>
<dbReference type="FunFam" id="1.10.10.2670:FF:000005">
    <property type="entry name" value="Uncharacterized protein, isoform A"/>
    <property type="match status" value="1"/>
</dbReference>
<dbReference type="Gene3D" id="6.10.140.340">
    <property type="match status" value="1"/>
</dbReference>
<dbReference type="Gene3D" id="1.10.10.2670">
    <property type="entry name" value="E3 ubiquitin-protein ligase"/>
    <property type="match status" value="1"/>
</dbReference>
<dbReference type="InterPro" id="IPR042065">
    <property type="entry name" value="E3_ELL-like"/>
</dbReference>
<dbReference type="InterPro" id="IPR031176">
    <property type="entry name" value="ELL/occludin"/>
</dbReference>
<dbReference type="InterPro" id="IPR019464">
    <property type="entry name" value="ELL_N"/>
</dbReference>
<dbReference type="InterPro" id="IPR010844">
    <property type="entry name" value="Occludin_ELL"/>
</dbReference>
<dbReference type="InterPro" id="IPR036390">
    <property type="entry name" value="WH_DNA-bd_sf"/>
</dbReference>
<dbReference type="PANTHER" id="PTHR23288">
    <property type="entry name" value="OCCLUDIN AND RNA POLYMERASE II ELONGATION FACTOR ELL"/>
    <property type="match status" value="1"/>
</dbReference>
<dbReference type="PANTHER" id="PTHR23288:SF17">
    <property type="entry name" value="RNA POLYMERASE II ELONGATION FACTOR ELL"/>
    <property type="match status" value="1"/>
</dbReference>
<dbReference type="Pfam" id="PF10390">
    <property type="entry name" value="ELL"/>
    <property type="match status" value="2"/>
</dbReference>
<dbReference type="Pfam" id="PF07303">
    <property type="entry name" value="Occludin_ELL"/>
    <property type="match status" value="1"/>
</dbReference>
<dbReference type="SUPFAM" id="SSF144292">
    <property type="entry name" value="occludin/ELL-like"/>
    <property type="match status" value="1"/>
</dbReference>
<dbReference type="SUPFAM" id="SSF46785">
    <property type="entry name" value="Winged helix' DNA-binding domain"/>
    <property type="match status" value="1"/>
</dbReference>
<dbReference type="PROSITE" id="PS51980">
    <property type="entry name" value="OCEL"/>
    <property type="match status" value="1"/>
</dbReference>
<accession>Q9VW51</accession>
<accession>Q95VE6</accession>
<reference key="1">
    <citation type="journal article" date="2001" name="EMBO J.">
        <title>Drosophila ELL is associated with actively elongating RNA polymerase II on transcriptionally active sites in vivo.</title>
        <authorList>
            <person name="Gerber M."/>
            <person name="Ma J."/>
            <person name="Dean K."/>
            <person name="Eissenberg J.C."/>
            <person name="Shilatifard A."/>
        </authorList>
    </citation>
    <scope>NUCLEOTIDE SEQUENCE [MRNA]</scope>
    <scope>FUNCTION</scope>
    <scope>ASSOCIATION WITH RNA POLYMERASE II</scope>
    <scope>SUBCELLULAR LOCATION</scope>
    <scope>DEVELOPMENTAL STAGE</scope>
</reference>
<reference key="2">
    <citation type="journal article" date="2000" name="Science">
        <title>The genome sequence of Drosophila melanogaster.</title>
        <authorList>
            <person name="Adams M.D."/>
            <person name="Celniker S.E."/>
            <person name="Holt R.A."/>
            <person name="Evans C.A."/>
            <person name="Gocayne J.D."/>
            <person name="Amanatides P.G."/>
            <person name="Scherer S.E."/>
            <person name="Li P.W."/>
            <person name="Hoskins R.A."/>
            <person name="Galle R.F."/>
            <person name="George R.A."/>
            <person name="Lewis S.E."/>
            <person name="Richards S."/>
            <person name="Ashburner M."/>
            <person name="Henderson S.N."/>
            <person name="Sutton G.G."/>
            <person name="Wortman J.R."/>
            <person name="Yandell M.D."/>
            <person name="Zhang Q."/>
            <person name="Chen L.X."/>
            <person name="Brandon R.C."/>
            <person name="Rogers Y.-H.C."/>
            <person name="Blazej R.G."/>
            <person name="Champe M."/>
            <person name="Pfeiffer B.D."/>
            <person name="Wan K.H."/>
            <person name="Doyle C."/>
            <person name="Baxter E.G."/>
            <person name="Helt G."/>
            <person name="Nelson C.R."/>
            <person name="Miklos G.L.G."/>
            <person name="Abril J.F."/>
            <person name="Agbayani A."/>
            <person name="An H.-J."/>
            <person name="Andrews-Pfannkoch C."/>
            <person name="Baldwin D."/>
            <person name="Ballew R.M."/>
            <person name="Basu A."/>
            <person name="Baxendale J."/>
            <person name="Bayraktaroglu L."/>
            <person name="Beasley E.M."/>
            <person name="Beeson K.Y."/>
            <person name="Benos P.V."/>
            <person name="Berman B.P."/>
            <person name="Bhandari D."/>
            <person name="Bolshakov S."/>
            <person name="Borkova D."/>
            <person name="Botchan M.R."/>
            <person name="Bouck J."/>
            <person name="Brokstein P."/>
            <person name="Brottier P."/>
            <person name="Burtis K.C."/>
            <person name="Busam D.A."/>
            <person name="Butler H."/>
            <person name="Cadieu E."/>
            <person name="Center A."/>
            <person name="Chandra I."/>
            <person name="Cherry J.M."/>
            <person name="Cawley S."/>
            <person name="Dahlke C."/>
            <person name="Davenport L.B."/>
            <person name="Davies P."/>
            <person name="de Pablos B."/>
            <person name="Delcher A."/>
            <person name="Deng Z."/>
            <person name="Mays A.D."/>
            <person name="Dew I."/>
            <person name="Dietz S.M."/>
            <person name="Dodson K."/>
            <person name="Doup L.E."/>
            <person name="Downes M."/>
            <person name="Dugan-Rocha S."/>
            <person name="Dunkov B.C."/>
            <person name="Dunn P."/>
            <person name="Durbin K.J."/>
            <person name="Evangelista C.C."/>
            <person name="Ferraz C."/>
            <person name="Ferriera S."/>
            <person name="Fleischmann W."/>
            <person name="Fosler C."/>
            <person name="Gabrielian A.E."/>
            <person name="Garg N.S."/>
            <person name="Gelbart W.M."/>
            <person name="Glasser K."/>
            <person name="Glodek A."/>
            <person name="Gong F."/>
            <person name="Gorrell J.H."/>
            <person name="Gu Z."/>
            <person name="Guan P."/>
            <person name="Harris M."/>
            <person name="Harris N.L."/>
            <person name="Harvey D.A."/>
            <person name="Heiman T.J."/>
            <person name="Hernandez J.R."/>
            <person name="Houck J."/>
            <person name="Hostin D."/>
            <person name="Houston K.A."/>
            <person name="Howland T.J."/>
            <person name="Wei M.-H."/>
            <person name="Ibegwam C."/>
            <person name="Jalali M."/>
            <person name="Kalush F."/>
            <person name="Karpen G.H."/>
            <person name="Ke Z."/>
            <person name="Kennison J.A."/>
            <person name="Ketchum K.A."/>
            <person name="Kimmel B.E."/>
            <person name="Kodira C.D."/>
            <person name="Kraft C.L."/>
            <person name="Kravitz S."/>
            <person name="Kulp D."/>
            <person name="Lai Z."/>
            <person name="Lasko P."/>
            <person name="Lei Y."/>
            <person name="Levitsky A.A."/>
            <person name="Li J.H."/>
            <person name="Li Z."/>
            <person name="Liang Y."/>
            <person name="Lin X."/>
            <person name="Liu X."/>
            <person name="Mattei B."/>
            <person name="McIntosh T.C."/>
            <person name="McLeod M.P."/>
            <person name="McPherson D."/>
            <person name="Merkulov G."/>
            <person name="Milshina N.V."/>
            <person name="Mobarry C."/>
            <person name="Morris J."/>
            <person name="Moshrefi A."/>
            <person name="Mount S.M."/>
            <person name="Moy M."/>
            <person name="Murphy B."/>
            <person name="Murphy L."/>
            <person name="Muzny D.M."/>
            <person name="Nelson D.L."/>
            <person name="Nelson D.R."/>
            <person name="Nelson K.A."/>
            <person name="Nixon K."/>
            <person name="Nusskern D.R."/>
            <person name="Pacleb J.M."/>
            <person name="Palazzolo M."/>
            <person name="Pittman G.S."/>
            <person name="Pan S."/>
            <person name="Pollard J."/>
            <person name="Puri V."/>
            <person name="Reese M.G."/>
            <person name="Reinert K."/>
            <person name="Remington K."/>
            <person name="Saunders R.D.C."/>
            <person name="Scheeler F."/>
            <person name="Shen H."/>
            <person name="Shue B.C."/>
            <person name="Siden-Kiamos I."/>
            <person name="Simpson M."/>
            <person name="Skupski M.P."/>
            <person name="Smith T.J."/>
            <person name="Spier E."/>
            <person name="Spradling A.C."/>
            <person name="Stapleton M."/>
            <person name="Strong R."/>
            <person name="Sun E."/>
            <person name="Svirskas R."/>
            <person name="Tector C."/>
            <person name="Turner R."/>
            <person name="Venter E."/>
            <person name="Wang A.H."/>
            <person name="Wang X."/>
            <person name="Wang Z.-Y."/>
            <person name="Wassarman D.A."/>
            <person name="Weinstock G.M."/>
            <person name="Weissenbach J."/>
            <person name="Williams S.M."/>
            <person name="Woodage T."/>
            <person name="Worley K.C."/>
            <person name="Wu D."/>
            <person name="Yang S."/>
            <person name="Yao Q.A."/>
            <person name="Ye J."/>
            <person name="Yeh R.-F."/>
            <person name="Zaveri J.S."/>
            <person name="Zhan M."/>
            <person name="Zhang G."/>
            <person name="Zhao Q."/>
            <person name="Zheng L."/>
            <person name="Zheng X.H."/>
            <person name="Zhong F.N."/>
            <person name="Zhong W."/>
            <person name="Zhou X."/>
            <person name="Zhu S.C."/>
            <person name="Zhu X."/>
            <person name="Smith H.O."/>
            <person name="Gibbs R.A."/>
            <person name="Myers E.W."/>
            <person name="Rubin G.M."/>
            <person name="Venter J.C."/>
        </authorList>
    </citation>
    <scope>NUCLEOTIDE SEQUENCE [LARGE SCALE GENOMIC DNA]</scope>
    <source>
        <strain>Berkeley</strain>
    </source>
</reference>
<reference key="3">
    <citation type="journal article" date="2002" name="Genome Biol.">
        <title>Annotation of the Drosophila melanogaster euchromatic genome: a systematic review.</title>
        <authorList>
            <person name="Misra S."/>
            <person name="Crosby M.A."/>
            <person name="Mungall C.J."/>
            <person name="Matthews B.B."/>
            <person name="Campbell K.S."/>
            <person name="Hradecky P."/>
            <person name="Huang Y."/>
            <person name="Kaminker J.S."/>
            <person name="Millburn G.H."/>
            <person name="Prochnik S.E."/>
            <person name="Smith C.D."/>
            <person name="Tupy J.L."/>
            <person name="Whitfield E.J."/>
            <person name="Bayraktaroglu L."/>
            <person name="Berman B.P."/>
            <person name="Bettencourt B.R."/>
            <person name="Celniker S.E."/>
            <person name="de Grey A.D.N.J."/>
            <person name="Drysdale R.A."/>
            <person name="Harris N.L."/>
            <person name="Richter J."/>
            <person name="Russo S."/>
            <person name="Schroeder A.J."/>
            <person name="Shu S.Q."/>
            <person name="Stapleton M."/>
            <person name="Yamada C."/>
            <person name="Ashburner M."/>
            <person name="Gelbart W.M."/>
            <person name="Rubin G.M."/>
            <person name="Lewis S.E."/>
        </authorList>
    </citation>
    <scope>GENOME REANNOTATION</scope>
    <source>
        <strain>Berkeley</strain>
    </source>
</reference>
<reference key="4">
    <citation type="journal article" date="2002" name="Genome Biol.">
        <title>A Drosophila full-length cDNA resource.</title>
        <authorList>
            <person name="Stapleton M."/>
            <person name="Carlson J.W."/>
            <person name="Brokstein P."/>
            <person name="Yu C."/>
            <person name="Champe M."/>
            <person name="George R.A."/>
            <person name="Guarin H."/>
            <person name="Kronmiller B."/>
            <person name="Pacleb J.M."/>
            <person name="Park S."/>
            <person name="Wan K.H."/>
            <person name="Rubin G.M."/>
            <person name="Celniker S.E."/>
        </authorList>
    </citation>
    <scope>NUCLEOTIDE SEQUENCE [LARGE SCALE MRNA]</scope>
    <source>
        <strain>Berkeley</strain>
        <tissue>Embryo</tissue>
    </source>
</reference>
<reference key="5">
    <citation type="journal article" date="2011" name="Mol. Cell">
        <title>The little elongation complex regulates small nuclear RNA transcription.</title>
        <authorList>
            <person name="Smith E.R."/>
            <person name="Lin C."/>
            <person name="Garrett A.S."/>
            <person name="Thornton J."/>
            <person name="Mohaghegh N."/>
            <person name="Hu D."/>
            <person name="Jackson J."/>
            <person name="Saraf A."/>
            <person name="Swanson S.K."/>
            <person name="Seidel C."/>
            <person name="Florens L."/>
            <person name="Washburn M.P."/>
            <person name="Eissenberg J.C."/>
            <person name="Shilatifard A."/>
        </authorList>
    </citation>
    <scope>FUNCTION</scope>
    <scope>SUBCELLULAR LOCATION</scope>
    <scope>IDENTIFICATION IN THE LEC COMPLEX</scope>
    <scope>IDENTIFICATION IN THE SEC COMPLEX</scope>
</reference>
<reference key="6">
    <citation type="journal article" date="2013" name="Mol. Cell">
        <title>The little elongation complex functions at initiation and elongation phases of snRNA gene transcription.</title>
        <authorList>
            <person name="Hu D."/>
            <person name="Smith E.R."/>
            <person name="Garruss A.S."/>
            <person name="Mohaghegh N."/>
            <person name="Varberg J.M."/>
            <person name="Lin C."/>
            <person name="Jackson J."/>
            <person name="Gao X."/>
            <person name="Saraf A."/>
            <person name="Florens L."/>
            <person name="Washburn M.P."/>
            <person name="Eissenberg J.C."/>
            <person name="Shilatifard A."/>
        </authorList>
    </citation>
    <scope>SUBCELLULAR LOCATION</scope>
</reference>
<name>ELL_DROME</name>
<feature type="chain" id="PRO_0000430426" description="RNA polymerase II elongation factor Ell">
    <location>
        <begin position="1"/>
        <end position="1059"/>
    </location>
</feature>
<feature type="domain" description="OCEL" evidence="2">
    <location>
        <begin position="827"/>
        <end position="939"/>
    </location>
</feature>
<feature type="region of interest" description="Disordered" evidence="3">
    <location>
        <begin position="171"/>
        <end position="277"/>
    </location>
</feature>
<feature type="region of interest" description="Disordered" evidence="3">
    <location>
        <begin position="314"/>
        <end position="374"/>
    </location>
</feature>
<feature type="region of interest" description="Disordered" evidence="3">
    <location>
        <begin position="450"/>
        <end position="509"/>
    </location>
</feature>
<feature type="region of interest" description="Disordered" evidence="3">
    <location>
        <begin position="522"/>
        <end position="581"/>
    </location>
</feature>
<feature type="region of interest" description="Disordered" evidence="3">
    <location>
        <begin position="598"/>
        <end position="827"/>
    </location>
</feature>
<feature type="region of interest" description="Disordered" evidence="3">
    <location>
        <begin position="968"/>
        <end position="1059"/>
    </location>
</feature>
<feature type="coiled-coil region" evidence="1">
    <location>
        <begin position="853"/>
        <end position="883"/>
    </location>
</feature>
<feature type="compositionally biased region" description="Low complexity" evidence="3">
    <location>
        <begin position="188"/>
        <end position="241"/>
    </location>
</feature>
<feature type="compositionally biased region" description="Low complexity" evidence="3">
    <location>
        <begin position="258"/>
        <end position="273"/>
    </location>
</feature>
<feature type="compositionally biased region" description="Low complexity" evidence="3">
    <location>
        <begin position="322"/>
        <end position="369"/>
    </location>
</feature>
<feature type="compositionally biased region" description="Low complexity" evidence="3">
    <location>
        <begin position="467"/>
        <end position="485"/>
    </location>
</feature>
<feature type="compositionally biased region" description="Gly residues" evidence="3">
    <location>
        <begin position="494"/>
        <end position="505"/>
    </location>
</feature>
<feature type="compositionally biased region" description="Low complexity" evidence="3">
    <location>
        <begin position="543"/>
        <end position="562"/>
    </location>
</feature>
<feature type="compositionally biased region" description="Polar residues" evidence="3">
    <location>
        <begin position="598"/>
        <end position="611"/>
    </location>
</feature>
<feature type="compositionally biased region" description="Low complexity" evidence="3">
    <location>
        <begin position="612"/>
        <end position="624"/>
    </location>
</feature>
<feature type="compositionally biased region" description="Low complexity" evidence="3">
    <location>
        <begin position="640"/>
        <end position="650"/>
    </location>
</feature>
<feature type="compositionally biased region" description="Low complexity" evidence="3">
    <location>
        <begin position="660"/>
        <end position="697"/>
    </location>
</feature>
<feature type="compositionally biased region" description="Polar residues" evidence="3">
    <location>
        <begin position="698"/>
        <end position="707"/>
    </location>
</feature>
<feature type="compositionally biased region" description="Polar residues" evidence="3">
    <location>
        <begin position="738"/>
        <end position="751"/>
    </location>
</feature>
<feature type="compositionally biased region" description="Low complexity" evidence="3">
    <location>
        <begin position="759"/>
        <end position="795"/>
    </location>
</feature>
<feature type="compositionally biased region" description="Low complexity" evidence="3">
    <location>
        <begin position="807"/>
        <end position="824"/>
    </location>
</feature>
<feature type="compositionally biased region" description="Basic residues" evidence="3">
    <location>
        <begin position="990"/>
        <end position="1001"/>
    </location>
</feature>
<feature type="compositionally biased region" description="Low complexity" evidence="3">
    <location>
        <begin position="1002"/>
        <end position="1026"/>
    </location>
</feature>
<feature type="compositionally biased region" description="Acidic residues" evidence="3">
    <location>
        <begin position="1027"/>
        <end position="1059"/>
    </location>
</feature>
<feature type="sequence conflict" description="In Ref. 1; AAL13036." evidence="7" ref="1">
    <original>R</original>
    <variation>S</variation>
    <location>
        <position position="229"/>
    </location>
</feature>
<feature type="sequence conflict" description="In Ref. 1; AAL13036." evidence="7" ref="1">
    <original>V</original>
    <variation>G</variation>
    <location>
        <position position="287"/>
    </location>
</feature>
<feature type="sequence conflict" description="In Ref. 1; AAL13036." evidence="7" ref="1">
    <original>S</original>
    <variation>G</variation>
    <location>
        <position position="501"/>
    </location>
</feature>
<feature type="sequence conflict" description="In Ref. 1; AAL13036." evidence="7" ref="1">
    <original>S</original>
    <variation>SQ</variation>
    <location>
        <position position="783"/>
    </location>
</feature>
<gene>
    <name type="primary">Ell</name>
    <name type="synonym">Su(Tpl)</name>
    <name type="ORF">CG32217</name>
</gene>